<feature type="chain" id="PRO_1000090837" description="Cysteine--tRNA ligase">
    <location>
        <begin position="1"/>
        <end position="465"/>
    </location>
</feature>
<feature type="short sequence motif" description="'HIGH' region">
    <location>
        <begin position="30"/>
        <end position="40"/>
    </location>
</feature>
<feature type="short sequence motif" description="'KMSKS' region">
    <location>
        <begin position="265"/>
        <end position="269"/>
    </location>
</feature>
<feature type="binding site" evidence="1">
    <location>
        <position position="28"/>
    </location>
    <ligand>
        <name>Zn(2+)</name>
        <dbReference type="ChEBI" id="CHEBI:29105"/>
    </ligand>
</feature>
<feature type="binding site" evidence="1">
    <location>
        <position position="208"/>
    </location>
    <ligand>
        <name>Zn(2+)</name>
        <dbReference type="ChEBI" id="CHEBI:29105"/>
    </ligand>
</feature>
<feature type="binding site" evidence="1">
    <location>
        <position position="233"/>
    </location>
    <ligand>
        <name>Zn(2+)</name>
        <dbReference type="ChEBI" id="CHEBI:29105"/>
    </ligand>
</feature>
<feature type="binding site" evidence="1">
    <location>
        <position position="237"/>
    </location>
    <ligand>
        <name>Zn(2+)</name>
        <dbReference type="ChEBI" id="CHEBI:29105"/>
    </ligand>
</feature>
<feature type="binding site" evidence="1">
    <location>
        <position position="268"/>
    </location>
    <ligand>
        <name>ATP</name>
        <dbReference type="ChEBI" id="CHEBI:30616"/>
    </ligand>
</feature>
<comment type="catalytic activity">
    <reaction evidence="1">
        <text>tRNA(Cys) + L-cysteine + ATP = L-cysteinyl-tRNA(Cys) + AMP + diphosphate</text>
        <dbReference type="Rhea" id="RHEA:17773"/>
        <dbReference type="Rhea" id="RHEA-COMP:9661"/>
        <dbReference type="Rhea" id="RHEA-COMP:9679"/>
        <dbReference type="ChEBI" id="CHEBI:30616"/>
        <dbReference type="ChEBI" id="CHEBI:33019"/>
        <dbReference type="ChEBI" id="CHEBI:35235"/>
        <dbReference type="ChEBI" id="CHEBI:78442"/>
        <dbReference type="ChEBI" id="CHEBI:78517"/>
        <dbReference type="ChEBI" id="CHEBI:456215"/>
        <dbReference type="EC" id="6.1.1.16"/>
    </reaction>
</comment>
<comment type="cofactor">
    <cofactor evidence="1">
        <name>Zn(2+)</name>
        <dbReference type="ChEBI" id="CHEBI:29105"/>
    </cofactor>
    <text evidence="1">Binds 1 zinc ion per subunit.</text>
</comment>
<comment type="subunit">
    <text evidence="1">Monomer.</text>
</comment>
<comment type="subcellular location">
    <subcellularLocation>
        <location evidence="1">Cytoplasm</location>
    </subcellularLocation>
</comment>
<comment type="similarity">
    <text evidence="1">Belongs to the class-I aminoacyl-tRNA synthetase family.</text>
</comment>
<sequence length="465" mass="53132">MIQLYNSMTGKKEPFKPLEEGKVKMYVCGPTVYNYIHIGNARPAIVFDTVRRYFTYRGYDVKYVSNFTDVDDKIIRTANELGEDYHALTKRFIEAYHADTGALNVQKADIHPLVTETMDDIIAFIEVLVKKGNAYASSGDVYFRTRSFKDYGQLSQQSIDELRSGARIEVGEKKEDPLDFVLWKAAKPGEPAWTSPWGEGRPGWHIECSAMAKKYLGDTIDIHAGGQDLKFPHHENEIAQSEACNSQKFANYWMHNGFLNIENEKMSKSLGNFLTVHEAIQAVDPMVLRFFMLSVQYRHPINYSRDLIDQAANGLARIRESVANVEHRLTMTADLGTATEKWLNRIEEIKQHFVTSMDDDFNTANAVTDLFDLSKEANLYLGEDQVAKEVLERFLAVFQELSTVLGVTLTIEKGLLDEEVEQLIRDRDTARKERDFARADAIRDQLRDQGILLEDTAQGMRWKRG</sequence>
<organism>
    <name type="scientific">Exiguobacterium sibiricum (strain DSM 17290 / CCUG 55495 / CIP 109462 / JCM 13490 / 255-15)</name>
    <dbReference type="NCBI Taxonomy" id="262543"/>
    <lineage>
        <taxon>Bacteria</taxon>
        <taxon>Bacillati</taxon>
        <taxon>Bacillota</taxon>
        <taxon>Bacilli</taxon>
        <taxon>Bacillales</taxon>
        <taxon>Bacillales Family XII. Incertae Sedis</taxon>
        <taxon>Exiguobacterium</taxon>
    </lineage>
</organism>
<name>SYC_EXIS2</name>
<dbReference type="EC" id="6.1.1.16" evidence="1"/>
<dbReference type="EMBL" id="CP001022">
    <property type="protein sequence ID" value="ACB59562.1"/>
    <property type="molecule type" value="Genomic_DNA"/>
</dbReference>
<dbReference type="RefSeq" id="WP_012368988.1">
    <property type="nucleotide sequence ID" value="NC_010556.1"/>
</dbReference>
<dbReference type="SMR" id="B1YGS9"/>
<dbReference type="STRING" id="262543.Exig_0075"/>
<dbReference type="KEGG" id="esi:Exig_0075"/>
<dbReference type="eggNOG" id="COG0215">
    <property type="taxonomic scope" value="Bacteria"/>
</dbReference>
<dbReference type="HOGENOM" id="CLU_013528_0_1_9"/>
<dbReference type="OrthoDB" id="9815130at2"/>
<dbReference type="Proteomes" id="UP000001681">
    <property type="component" value="Chromosome"/>
</dbReference>
<dbReference type="GO" id="GO:0005829">
    <property type="term" value="C:cytosol"/>
    <property type="evidence" value="ECO:0007669"/>
    <property type="project" value="TreeGrafter"/>
</dbReference>
<dbReference type="GO" id="GO:0005524">
    <property type="term" value="F:ATP binding"/>
    <property type="evidence" value="ECO:0007669"/>
    <property type="project" value="UniProtKB-UniRule"/>
</dbReference>
<dbReference type="GO" id="GO:0004817">
    <property type="term" value="F:cysteine-tRNA ligase activity"/>
    <property type="evidence" value="ECO:0007669"/>
    <property type="project" value="UniProtKB-UniRule"/>
</dbReference>
<dbReference type="GO" id="GO:0008270">
    <property type="term" value="F:zinc ion binding"/>
    <property type="evidence" value="ECO:0007669"/>
    <property type="project" value="UniProtKB-UniRule"/>
</dbReference>
<dbReference type="GO" id="GO:0006423">
    <property type="term" value="P:cysteinyl-tRNA aminoacylation"/>
    <property type="evidence" value="ECO:0007669"/>
    <property type="project" value="UniProtKB-UniRule"/>
</dbReference>
<dbReference type="CDD" id="cd00672">
    <property type="entry name" value="CysRS_core"/>
    <property type="match status" value="1"/>
</dbReference>
<dbReference type="FunFam" id="3.40.50.620:FF:000009">
    <property type="entry name" value="Cysteine--tRNA ligase"/>
    <property type="match status" value="1"/>
</dbReference>
<dbReference type="Gene3D" id="1.20.120.1910">
    <property type="entry name" value="Cysteine-tRNA ligase, C-terminal anti-codon recognition domain"/>
    <property type="match status" value="1"/>
</dbReference>
<dbReference type="Gene3D" id="3.40.50.620">
    <property type="entry name" value="HUPs"/>
    <property type="match status" value="1"/>
</dbReference>
<dbReference type="HAMAP" id="MF_00041">
    <property type="entry name" value="Cys_tRNA_synth"/>
    <property type="match status" value="1"/>
</dbReference>
<dbReference type="InterPro" id="IPR015803">
    <property type="entry name" value="Cys-tRNA-ligase"/>
</dbReference>
<dbReference type="InterPro" id="IPR015273">
    <property type="entry name" value="Cys-tRNA-synt_Ia_DALR"/>
</dbReference>
<dbReference type="InterPro" id="IPR024909">
    <property type="entry name" value="Cys-tRNA/MSH_ligase"/>
</dbReference>
<dbReference type="InterPro" id="IPR056411">
    <property type="entry name" value="CysS_C"/>
</dbReference>
<dbReference type="InterPro" id="IPR014729">
    <property type="entry name" value="Rossmann-like_a/b/a_fold"/>
</dbReference>
<dbReference type="InterPro" id="IPR032678">
    <property type="entry name" value="tRNA-synt_1_cat_dom"/>
</dbReference>
<dbReference type="InterPro" id="IPR009080">
    <property type="entry name" value="tRNAsynth_Ia_anticodon-bd"/>
</dbReference>
<dbReference type="NCBIfam" id="TIGR00435">
    <property type="entry name" value="cysS"/>
    <property type="match status" value="1"/>
</dbReference>
<dbReference type="PANTHER" id="PTHR10890:SF3">
    <property type="entry name" value="CYSTEINE--TRNA LIGASE, CYTOPLASMIC"/>
    <property type="match status" value="1"/>
</dbReference>
<dbReference type="PANTHER" id="PTHR10890">
    <property type="entry name" value="CYSTEINYL-TRNA SYNTHETASE"/>
    <property type="match status" value="1"/>
</dbReference>
<dbReference type="Pfam" id="PF23493">
    <property type="entry name" value="CysS_C"/>
    <property type="match status" value="1"/>
</dbReference>
<dbReference type="Pfam" id="PF09190">
    <property type="entry name" value="DALR_2"/>
    <property type="match status" value="1"/>
</dbReference>
<dbReference type="Pfam" id="PF01406">
    <property type="entry name" value="tRNA-synt_1e"/>
    <property type="match status" value="1"/>
</dbReference>
<dbReference type="PRINTS" id="PR00983">
    <property type="entry name" value="TRNASYNTHCYS"/>
</dbReference>
<dbReference type="SMART" id="SM00840">
    <property type="entry name" value="DALR_2"/>
    <property type="match status" value="1"/>
</dbReference>
<dbReference type="SUPFAM" id="SSF47323">
    <property type="entry name" value="Anticodon-binding domain of a subclass of class I aminoacyl-tRNA synthetases"/>
    <property type="match status" value="1"/>
</dbReference>
<dbReference type="SUPFAM" id="SSF52374">
    <property type="entry name" value="Nucleotidylyl transferase"/>
    <property type="match status" value="1"/>
</dbReference>
<keyword id="KW-0030">Aminoacyl-tRNA synthetase</keyword>
<keyword id="KW-0067">ATP-binding</keyword>
<keyword id="KW-0963">Cytoplasm</keyword>
<keyword id="KW-0436">Ligase</keyword>
<keyword id="KW-0479">Metal-binding</keyword>
<keyword id="KW-0547">Nucleotide-binding</keyword>
<keyword id="KW-0648">Protein biosynthesis</keyword>
<keyword id="KW-1185">Reference proteome</keyword>
<keyword id="KW-0862">Zinc</keyword>
<accession>B1YGS9</accession>
<gene>
    <name evidence="1" type="primary">cysS</name>
    <name type="ordered locus">Exig_0075</name>
</gene>
<evidence type="ECO:0000255" key="1">
    <source>
        <dbReference type="HAMAP-Rule" id="MF_00041"/>
    </source>
</evidence>
<protein>
    <recommendedName>
        <fullName evidence="1">Cysteine--tRNA ligase</fullName>
        <ecNumber evidence="1">6.1.1.16</ecNumber>
    </recommendedName>
    <alternativeName>
        <fullName evidence="1">Cysteinyl-tRNA synthetase</fullName>
        <shortName evidence="1">CysRS</shortName>
    </alternativeName>
</protein>
<proteinExistence type="inferred from homology"/>
<reference key="1">
    <citation type="submission" date="2008-04" db="EMBL/GenBank/DDBJ databases">
        <title>Complete sequence of chromosome of Exiguobacterium sibiricum 255-15.</title>
        <authorList>
            <consortium name="US DOE Joint Genome Institute"/>
            <person name="Copeland A."/>
            <person name="Lucas S."/>
            <person name="Lapidus A."/>
            <person name="Glavina del Rio T."/>
            <person name="Dalin E."/>
            <person name="Tice H."/>
            <person name="Bruce D."/>
            <person name="Goodwin L."/>
            <person name="Pitluck S."/>
            <person name="Kiss H."/>
            <person name="Chertkov O."/>
            <person name="Monk C."/>
            <person name="Brettin T."/>
            <person name="Detter J.C."/>
            <person name="Han C."/>
            <person name="Kuske C.R."/>
            <person name="Schmutz J."/>
            <person name="Larimer F."/>
            <person name="Land M."/>
            <person name="Hauser L."/>
            <person name="Kyrpides N."/>
            <person name="Mikhailova N."/>
            <person name="Vishnivetskaya T."/>
            <person name="Rodrigues D.F."/>
            <person name="Gilichinsky D."/>
            <person name="Tiedje J."/>
            <person name="Richardson P."/>
        </authorList>
    </citation>
    <scope>NUCLEOTIDE SEQUENCE [LARGE SCALE GENOMIC DNA]</scope>
    <source>
        <strain>DSM 17290 / CCUG 55495 / CIP 109462 / JCM 13490 / 255-15</strain>
    </source>
</reference>